<accession>G5EG88</accession>
<protein>
    <recommendedName>
        <fullName evidence="5">Betaine receptor acr-23</fullName>
    </recommendedName>
    <alternativeName>
        <fullName>Acetylcholine receptor subunit alpha-type acr-23</fullName>
    </alternativeName>
</protein>
<reference evidence="9" key="1">
    <citation type="journal article" date="1998" name="Science">
        <title>Genome sequence of the nematode C. elegans: a platform for investigating biology.</title>
        <authorList>
            <consortium name="The C. elegans sequencing consortium"/>
        </authorList>
    </citation>
    <scope>NUCLEOTIDE SEQUENCE [LARGE SCALE GENOMIC DNA]</scope>
    <source>
        <strain evidence="9">Bristol N2</strain>
    </source>
</reference>
<reference evidence="8" key="2">
    <citation type="submission" date="2004-01" db="EMBL/GenBank/DDBJ databases">
        <title>The Caenorhabditis elegans transcriptome project, a complementary view of the genome.</title>
        <authorList>
            <person name="Kohara Y."/>
            <person name="Shin-i T."/>
            <person name="Suzuki Y."/>
            <person name="Sugano S."/>
            <person name="Thierry-Mieg D."/>
            <person name="Thierry-Mieg J."/>
        </authorList>
    </citation>
    <scope>NUCLEOTIDE SEQUENCE [LARGE SCALE MRNA]</scope>
</reference>
<reference evidence="6" key="3">
    <citation type="journal article" date="2002" name="Protein Sci.">
        <title>Novel alpha7-like nicotinic acetylcholine receptor subunits in the nematode Caenorhabditis elegans.</title>
        <authorList>
            <person name="Mongan N.P."/>
            <person name="Jones A.K."/>
            <person name="Smith G.R."/>
            <person name="Sansom M.S."/>
            <person name="Sattelle D.B."/>
        </authorList>
    </citation>
    <scope>IDENTIFICATION</scope>
</reference>
<reference evidence="6" key="4">
    <citation type="journal article" date="2013" name="Nat. Neurosci.">
        <title>Betaine acts on a ligand-gated ion channel in the nervous system of the nematode C. elegans.</title>
        <authorList>
            <person name="Peden A.S."/>
            <person name="Mac P."/>
            <person name="Fei Y.J."/>
            <person name="Castro C."/>
            <person name="Jiang G."/>
            <person name="Murfitt K.J."/>
            <person name="Miska E.A."/>
            <person name="Griffin J.L."/>
            <person name="Ganapathy V."/>
            <person name="Jorgensen E.M."/>
        </authorList>
    </citation>
    <scope>SUBCELLULAR LOCATION</scope>
    <scope>FUNCTION</scope>
    <scope>TISSUE SPECIFICITY</scope>
    <scope>DISRUPTION PHENOTYPE</scope>
    <scope>MUTAGENESIS OF ILE-301 AND PRO-311</scope>
    <source>
        <strain evidence="4">Bristol N2</strain>
    </source>
</reference>
<reference evidence="6" key="5">
    <citation type="journal article" date="2013" name="PLoS Pathog.">
        <title>acr-23 encodes a monepantel-sensitive channel in Caenorhabditis elegans.</title>
        <authorList>
            <person name="Rufener L."/>
            <person name="Bedoni N."/>
            <person name="Baur R."/>
            <person name="Rey S."/>
            <person name="Glauser D.A."/>
            <person name="Bouvier J."/>
            <person name="Beech R."/>
            <person name="Sigel E."/>
            <person name="Puoti A."/>
        </authorList>
    </citation>
    <scope>FUNCTION</scope>
    <scope>SUBCELLULAR LOCATION</scope>
    <scope>TISSUE SPECIFICITY</scope>
    <scope>DEVELOPMENTAL STAGE</scope>
    <scope>DISRUPTION PHENOTYPE</scope>
    <scope>MUTAGENESIS OF ASP-112 AND ALA-321</scope>
    <source>
        <strain evidence="3">Bristol N2</strain>
    </source>
</reference>
<proteinExistence type="evidence at protein level"/>
<dbReference type="EMBL" id="FO081512">
    <property type="protein sequence ID" value="CCD72123.1"/>
    <property type="molecule type" value="Genomic_DNA"/>
</dbReference>
<dbReference type="EMBL" id="AY519853">
    <property type="protein sequence ID" value="AAR89634.1"/>
    <property type="molecule type" value="mRNA"/>
</dbReference>
<dbReference type="PIR" id="A89008">
    <property type="entry name" value="A89008"/>
</dbReference>
<dbReference type="RefSeq" id="NP_504024.2">
    <property type="nucleotide sequence ID" value="NM_071623.5"/>
</dbReference>
<dbReference type="PDB" id="8ZFK">
    <property type="method" value="EM"/>
    <property type="resolution" value="2.64 A"/>
    <property type="chains" value="A/B/C/D/E=1-397, A/B/C/D/E=448-545"/>
</dbReference>
<dbReference type="PDB" id="8ZFL">
    <property type="method" value="EM"/>
    <property type="resolution" value="2.61 A"/>
    <property type="chains" value="A/B/C/D/E=1-397, A/B/C/D/E=448-545"/>
</dbReference>
<dbReference type="PDB" id="8ZFM">
    <property type="method" value="EM"/>
    <property type="resolution" value="2.96 A"/>
    <property type="chains" value="A/B/C/D/E=1-397, A/B/C/D/E=448-545"/>
</dbReference>
<dbReference type="PDBsum" id="8ZFK"/>
<dbReference type="PDBsum" id="8ZFL"/>
<dbReference type="PDBsum" id="8ZFM"/>
<dbReference type="EMDB" id="EMD-60063"/>
<dbReference type="EMDB" id="EMD-60064"/>
<dbReference type="EMDB" id="EMD-60065"/>
<dbReference type="SMR" id="G5EG88"/>
<dbReference type="FunCoup" id="G5EG88">
    <property type="interactions" value="70"/>
</dbReference>
<dbReference type="STRING" id="6239.F59B1.9a.1"/>
<dbReference type="GlyCosmos" id="G5EG88">
    <property type="glycosylation" value="4 sites, No reported glycans"/>
</dbReference>
<dbReference type="PaxDb" id="6239-F59B1.9"/>
<dbReference type="PeptideAtlas" id="G5EG88"/>
<dbReference type="EnsemblMetazoa" id="F59B1.9a.1">
    <property type="protein sequence ID" value="F59B1.9a.1"/>
    <property type="gene ID" value="WBGene00000062"/>
</dbReference>
<dbReference type="GeneID" id="191606"/>
<dbReference type="KEGG" id="cel:CELE_F59B1.9"/>
<dbReference type="AGR" id="WB:WBGene00000062"/>
<dbReference type="CTD" id="191606"/>
<dbReference type="WormBase" id="F59B1.9a">
    <property type="protein sequence ID" value="CE36939"/>
    <property type="gene ID" value="WBGene00000062"/>
    <property type="gene designation" value="acr-23"/>
</dbReference>
<dbReference type="eggNOG" id="KOG3645">
    <property type="taxonomic scope" value="Eukaryota"/>
</dbReference>
<dbReference type="HOGENOM" id="CLU_018074_2_5_1"/>
<dbReference type="InParanoid" id="G5EG88"/>
<dbReference type="OMA" id="TEIMVRH"/>
<dbReference type="OrthoDB" id="6097796at2759"/>
<dbReference type="PhylomeDB" id="G5EG88"/>
<dbReference type="Reactome" id="R-CEL-112314">
    <property type="pathway name" value="Neurotransmitter receptors and postsynaptic signal transmission"/>
</dbReference>
<dbReference type="Reactome" id="R-CEL-629594">
    <property type="pathway name" value="Highly calcium permeable postsynaptic nicotinic acetylcholine receptors"/>
</dbReference>
<dbReference type="PRO" id="PR:G5EG88"/>
<dbReference type="Proteomes" id="UP000001940">
    <property type="component" value="Chromosome V"/>
</dbReference>
<dbReference type="Bgee" id="WBGene00000062">
    <property type="expression patterns" value="Expressed in larva"/>
</dbReference>
<dbReference type="ExpressionAtlas" id="G5EG88">
    <property type="expression patterns" value="baseline and differential"/>
</dbReference>
<dbReference type="GO" id="GO:0043005">
    <property type="term" value="C:neuron projection"/>
    <property type="evidence" value="ECO:0000318"/>
    <property type="project" value="GO_Central"/>
</dbReference>
<dbReference type="GO" id="GO:0005886">
    <property type="term" value="C:plasma membrane"/>
    <property type="evidence" value="ECO:0000318"/>
    <property type="project" value="GO_Central"/>
</dbReference>
<dbReference type="GO" id="GO:0098794">
    <property type="term" value="C:postsynapse"/>
    <property type="evidence" value="ECO:0007669"/>
    <property type="project" value="GOC"/>
</dbReference>
<dbReference type="GO" id="GO:0045202">
    <property type="term" value="C:synapse"/>
    <property type="evidence" value="ECO:0000318"/>
    <property type="project" value="GO_Central"/>
</dbReference>
<dbReference type="GO" id="GO:1902495">
    <property type="term" value="C:transmembrane transporter complex"/>
    <property type="evidence" value="ECO:0000318"/>
    <property type="project" value="GO_Central"/>
</dbReference>
<dbReference type="GO" id="GO:0005231">
    <property type="term" value="F:excitatory extracellular ligand-gated monoatomic ion channel activity"/>
    <property type="evidence" value="ECO:0000318"/>
    <property type="project" value="GO_Central"/>
</dbReference>
<dbReference type="GO" id="GO:0004888">
    <property type="term" value="F:transmembrane signaling receptor activity"/>
    <property type="evidence" value="ECO:0007669"/>
    <property type="project" value="InterPro"/>
</dbReference>
<dbReference type="GO" id="GO:1904315">
    <property type="term" value="F:transmitter-gated monoatomic ion channel activity involved in regulation of postsynaptic membrane potential"/>
    <property type="evidence" value="ECO:0000318"/>
    <property type="project" value="GO_Central"/>
</dbReference>
<dbReference type="GO" id="GO:0007268">
    <property type="term" value="P:chemical synaptic transmission"/>
    <property type="evidence" value="ECO:0000318"/>
    <property type="project" value="GO_Central"/>
</dbReference>
<dbReference type="GO" id="GO:0034220">
    <property type="term" value="P:monoatomic ion transmembrane transport"/>
    <property type="evidence" value="ECO:0000318"/>
    <property type="project" value="GO_Central"/>
</dbReference>
<dbReference type="GO" id="GO:0042391">
    <property type="term" value="P:regulation of membrane potential"/>
    <property type="evidence" value="ECO:0000318"/>
    <property type="project" value="GO_Central"/>
</dbReference>
<dbReference type="CDD" id="cd18997">
    <property type="entry name" value="LGIC_ECD_nAChR"/>
    <property type="match status" value="1"/>
</dbReference>
<dbReference type="CDD" id="cd19051">
    <property type="entry name" value="LGIC_TM_cation"/>
    <property type="match status" value="1"/>
</dbReference>
<dbReference type="FunFam" id="1.20.58.390:FF:000049">
    <property type="entry name" value="AcetylCholine Receptor"/>
    <property type="match status" value="1"/>
</dbReference>
<dbReference type="FunFam" id="2.70.170.10:FF:000031">
    <property type="entry name" value="AcetylCholine Receptor"/>
    <property type="match status" value="1"/>
</dbReference>
<dbReference type="Gene3D" id="2.70.170.10">
    <property type="entry name" value="Neurotransmitter-gated ion-channel ligand-binding domain"/>
    <property type="match status" value="1"/>
</dbReference>
<dbReference type="Gene3D" id="1.20.58.390">
    <property type="entry name" value="Neurotransmitter-gated ion-channel transmembrane domain"/>
    <property type="match status" value="1"/>
</dbReference>
<dbReference type="InterPro" id="IPR006202">
    <property type="entry name" value="Neur_chan_lig-bd"/>
</dbReference>
<dbReference type="InterPro" id="IPR036734">
    <property type="entry name" value="Neur_chan_lig-bd_sf"/>
</dbReference>
<dbReference type="InterPro" id="IPR006201">
    <property type="entry name" value="Neur_channel"/>
</dbReference>
<dbReference type="InterPro" id="IPR036719">
    <property type="entry name" value="Neuro-gated_channel_TM_sf"/>
</dbReference>
<dbReference type="InterPro" id="IPR038050">
    <property type="entry name" value="Neuro_actylchol_rec"/>
</dbReference>
<dbReference type="InterPro" id="IPR006029">
    <property type="entry name" value="Neurotrans-gated_channel_TM"/>
</dbReference>
<dbReference type="InterPro" id="IPR018000">
    <property type="entry name" value="Neurotransmitter_ion_chnl_CS"/>
</dbReference>
<dbReference type="PANTHER" id="PTHR18945">
    <property type="entry name" value="NEUROTRANSMITTER GATED ION CHANNEL"/>
    <property type="match status" value="1"/>
</dbReference>
<dbReference type="Pfam" id="PF02931">
    <property type="entry name" value="Neur_chan_LBD"/>
    <property type="match status" value="1"/>
</dbReference>
<dbReference type="Pfam" id="PF02932">
    <property type="entry name" value="Neur_chan_memb"/>
    <property type="match status" value="1"/>
</dbReference>
<dbReference type="PRINTS" id="PR00252">
    <property type="entry name" value="NRIONCHANNEL"/>
</dbReference>
<dbReference type="SUPFAM" id="SSF90112">
    <property type="entry name" value="Neurotransmitter-gated ion-channel transmembrane pore"/>
    <property type="match status" value="1"/>
</dbReference>
<dbReference type="SUPFAM" id="SSF63712">
    <property type="entry name" value="Nicotinic receptor ligand binding domain-like"/>
    <property type="match status" value="1"/>
</dbReference>
<dbReference type="PROSITE" id="PS00236">
    <property type="entry name" value="NEUROTR_ION_CHANNEL"/>
    <property type="match status" value="1"/>
</dbReference>
<comment type="function">
    <text evidence="3 4">Betaine receptor that functions as a ligand-gated non-selective monovalent cation channel in mechanosensory neurons to maintain basal levels of locomotion. The channel is permeable to Na(+) and K(+) but not to Ba(2+) or Ca(2+) ions. Elicits current in response to betaine, very weak current in response to choline, virtually no current in response to acetylcholine and nicotine, and no current in response to glycine and GABA.</text>
</comment>
<comment type="subcellular location">
    <subcellularLocation>
        <location evidence="3 4">Cell membrane</location>
        <topology evidence="4 7">Multi-pass membrane protein</topology>
    </subcellularLocation>
</comment>
<comment type="tissue specificity">
    <text evidence="3 4">Expressed in the body wall muscles that are arranged into four longitudinal bundles, some mechanosensory neurons, the head muscles and multiple interneurons. Not expressed in motor neurons (at protein level).</text>
</comment>
<comment type="developmental stage">
    <text evidence="3">Not expressed in embryos and L1 stage but expressed from L2 stage to adulthood in the body wall muscles (at protein level).</text>
</comment>
<comment type="disruption phenotype">
    <text evidence="3 4">Mutant worms are morphologically similar to the wild-type but exhibit mild swimming defects and are lethargic with their movement being interrupted by frequent pauses when crawling on a food-free environment (PubMed:24212673). On the same environment, in other occasions they display decreased rates of spontaneous reversal and steering, and slightly increased average speed (PubMed:23950710). Homozygotes are fully resistant to monepantel but heterozygotes are partially affected by the drug with reduced fertility and slightly impaired movement.</text>
</comment>
<comment type="miscellaneous">
    <text evidence="3 4">Suppresses snf-3 mutant phenotype growth defects. Elicits no current in response to the broad-spectrum antiparasitic medicine ivermectin. This channel is allosterically sensitive to monepantel, an anthelmintic of the amino-acetonitrile derivatives (AADs) class, leading to muscle paralysis upon treatment with monepantel.</text>
</comment>
<comment type="similarity">
    <text evidence="2">Belongs to the ligand-gated ion channel (TC 1.A.9) family. Acetylcholine receptor (TC 1.A.9.1) subfamily.</text>
</comment>
<name>ACH23_CAEEL</name>
<evidence type="ECO:0000250" key="1">
    <source>
        <dbReference type="UniProtKB" id="P02708"/>
    </source>
</evidence>
<evidence type="ECO:0000255" key="2"/>
<evidence type="ECO:0000269" key="3">
    <source>
    </source>
</evidence>
<evidence type="ECO:0000269" key="4">
    <source>
    </source>
</evidence>
<evidence type="ECO:0000303" key="5">
    <source>
    </source>
</evidence>
<evidence type="ECO:0000305" key="6"/>
<evidence type="ECO:0000305" key="7">
    <source>
    </source>
</evidence>
<evidence type="ECO:0000312" key="8">
    <source>
        <dbReference type="EMBL" id="AAR89634.1"/>
    </source>
</evidence>
<evidence type="ECO:0000312" key="9">
    <source>
        <dbReference type="EMBL" id="CCD72123.1"/>
    </source>
</evidence>
<evidence type="ECO:0000312" key="10">
    <source>
        <dbReference type="WormBase" id="F59B1.9a"/>
    </source>
</evidence>
<evidence type="ECO:0007829" key="11">
    <source>
        <dbReference type="PDB" id="8ZFL"/>
    </source>
</evidence>
<gene>
    <name evidence="9 10" type="primary">acr-23</name>
    <name type="ORF">5E130</name>
    <name type="ORF">F59B1.9</name>
</gene>
<feature type="signal peptide" evidence="2">
    <location>
        <begin position="1"/>
        <end position="19"/>
    </location>
</feature>
<feature type="chain" id="PRO_0000425863" description="Betaine receptor acr-23" evidence="2">
    <location>
        <begin position="20"/>
        <end position="545"/>
    </location>
</feature>
<feature type="topological domain" description="Extracellular" evidence="2">
    <location>
        <begin position="20"/>
        <end position="244"/>
    </location>
</feature>
<feature type="transmembrane region" description="Helical" evidence="2">
    <location>
        <begin position="245"/>
        <end position="265"/>
    </location>
</feature>
<feature type="transmembrane region" description="Helical" evidence="2">
    <location>
        <begin position="287"/>
        <end position="307"/>
    </location>
</feature>
<feature type="transmembrane region" description="Helical" evidence="2">
    <location>
        <begin position="317"/>
        <end position="337"/>
    </location>
</feature>
<feature type="topological domain" description="Cytoplasmic" evidence="2">
    <location>
        <begin position="338"/>
        <end position="512"/>
    </location>
</feature>
<feature type="transmembrane region" description="Helical" evidence="2">
    <location>
        <begin position="513"/>
        <end position="533"/>
    </location>
</feature>
<feature type="glycosylation site" description="N-linked (GlcNAc...) asparagine" evidence="2">
    <location>
        <position position="53"/>
    </location>
</feature>
<feature type="glycosylation site" description="N-linked (GlcNAc...) asparagine" evidence="2">
    <location>
        <position position="97"/>
    </location>
</feature>
<feature type="glycosylation site" description="N-linked (GlcNAc...) asparagine" evidence="2">
    <location>
        <position position="228"/>
    </location>
</feature>
<feature type="glycosylation site" description="N-linked (GlcNAc...) asparagine" evidence="2">
    <location>
        <position position="276"/>
    </location>
</feature>
<feature type="disulfide bond" evidence="1">
    <location>
        <begin position="157"/>
        <end position="171"/>
    </location>
</feature>
<feature type="disulfide bond" description="Associated with receptor activation" evidence="1">
    <location>
        <begin position="224"/>
        <end position="225"/>
    </location>
</feature>
<feature type="mutagenesis site" description="In cb101; highly resistant to monepantel." evidence="3">
    <original>D</original>
    <variation>N</variation>
    <location>
        <position position="112"/>
    </location>
</feature>
<feature type="mutagenesis site" description="Increases sensitivity to betaine. Leads to death during larval development in most cases, with escapees reaching to adulthood but being hypercontracted and uncoordinated." evidence="4">
    <original>I</original>
    <variation>N</variation>
    <location>
        <position position="301"/>
    </location>
</feature>
<feature type="mutagenesis site" description="In ox429; mild swimming defects and lethargic movement when crawling on a food-free environment." evidence="4">
    <original>P</original>
    <variation>L</variation>
    <location>
        <position position="311"/>
    </location>
</feature>
<feature type="mutagenesis site" description="In cb103; highly resistant to monepantel." evidence="3">
    <original>A</original>
    <variation>T</variation>
    <location>
        <position position="321"/>
    </location>
</feature>
<feature type="helix" evidence="11">
    <location>
        <begin position="26"/>
        <end position="34"/>
    </location>
</feature>
<feature type="strand" evidence="11">
    <location>
        <begin position="48"/>
        <end position="50"/>
    </location>
</feature>
<feature type="strand" evidence="11">
    <location>
        <begin position="52"/>
        <end position="67"/>
    </location>
</feature>
<feature type="turn" evidence="11">
    <location>
        <begin position="68"/>
        <end position="71"/>
    </location>
</feature>
<feature type="strand" evidence="11">
    <location>
        <begin position="72"/>
        <end position="85"/>
    </location>
</feature>
<feature type="helix" evidence="11">
    <location>
        <begin position="92"/>
        <end position="95"/>
    </location>
</feature>
<feature type="strand" evidence="11">
    <location>
        <begin position="100"/>
        <end position="104"/>
    </location>
</feature>
<feature type="turn" evidence="11">
    <location>
        <begin position="105"/>
        <end position="107"/>
    </location>
</feature>
<feature type="strand" evidence="11">
    <location>
        <begin position="113"/>
        <end position="115"/>
    </location>
</feature>
<feature type="turn" evidence="11">
    <location>
        <begin position="123"/>
        <end position="126"/>
    </location>
</feature>
<feature type="strand" evidence="11">
    <location>
        <begin position="131"/>
        <end position="136"/>
    </location>
</feature>
<feature type="turn" evidence="11">
    <location>
        <begin position="139"/>
        <end position="141"/>
    </location>
</feature>
<feature type="strand" evidence="11">
    <location>
        <begin position="143"/>
        <end position="155"/>
    </location>
</feature>
<feature type="turn" evidence="11">
    <location>
        <begin position="162"/>
        <end position="165"/>
    </location>
</feature>
<feature type="strand" evidence="11">
    <location>
        <begin position="168"/>
        <end position="179"/>
    </location>
</feature>
<feature type="turn" evidence="11">
    <location>
        <begin position="182"/>
        <end position="184"/>
    </location>
</feature>
<feature type="strand" evidence="11">
    <location>
        <begin position="185"/>
        <end position="189"/>
    </location>
</feature>
<feature type="strand" evidence="11">
    <location>
        <begin position="196"/>
        <end position="198"/>
    </location>
</feature>
<feature type="strand" evidence="11">
    <location>
        <begin position="206"/>
        <end position="221"/>
    </location>
</feature>
<feature type="strand" evidence="11">
    <location>
        <begin position="223"/>
        <end position="226"/>
    </location>
</feature>
<feature type="strand" evidence="11">
    <location>
        <begin position="228"/>
        <end position="240"/>
    </location>
</feature>
<feature type="helix" evidence="11">
    <location>
        <begin position="243"/>
        <end position="248"/>
    </location>
</feature>
<feature type="helix" evidence="11">
    <location>
        <begin position="250"/>
        <end position="264"/>
    </location>
</feature>
<feature type="strand" evidence="11">
    <location>
        <begin position="281"/>
        <end position="283"/>
    </location>
</feature>
<feature type="helix" evidence="11">
    <location>
        <begin position="289"/>
        <end position="305"/>
    </location>
</feature>
<feature type="strand" evidence="11">
    <location>
        <begin position="314"/>
        <end position="316"/>
    </location>
</feature>
<feature type="helix" evidence="11">
    <location>
        <begin position="319"/>
        <end position="345"/>
    </location>
</feature>
<feature type="helix" evidence="11">
    <location>
        <begin position="346"/>
        <end position="349"/>
    </location>
</feature>
<feature type="helix" evidence="11">
    <location>
        <begin position="356"/>
        <end position="369"/>
    </location>
</feature>
<feature type="helix" evidence="11">
    <location>
        <begin position="375"/>
        <end position="395"/>
    </location>
</feature>
<feature type="helix" evidence="11">
    <location>
        <begin position="498"/>
        <end position="542"/>
    </location>
</feature>
<sequence length="545" mass="62549">MHRIYTFLIFISQLALGLSNNPDIPIQYELANNIMENYQKGLIPKVRKGSPINVTLSLQLYQIIQVNEPQQYLLLNAWAVERWVDQMLGWDPSEFDNETEIMARHDDIWLPDTTLYNSLEMDDSASKKLTHVKLTTLGKNQGAMVELLYPTIYKISCLLNLKYFPFDTQTCRMTFGSWSFDNSLIDYFPRTFTNGPIGLANFLENDAWSVLGTKVNREEKKYTCCPVNYTLLHYDVVIQRKPLYYVLNLIAPTAVITFISIIGFFTSVNPFTNFCNVSSSVHDLRQEKITLGITTLLSMSIMIFMVSDKMPSTSTCVPLIALFYTLMITIISVGTLAASSVIFVQKLGSIGNPPASKTMKWTHRIAPFVLIQMPLVMKQAYAKRAKEEKHRKRMSRKNSMWTKVYHLARDHSKLMETVPDGAVKFNQISDFKNNDIGNMESPRMAESQTSETFAAPMDTSFTESLHIPELNRVASSNSIQSVLKPTEIQLTPYCTRNIVELEWDWVAAVLERVFLIFFTICFLFSAIGINLYGWYIWYTENHFLF</sequence>
<keyword id="KW-0002">3D-structure</keyword>
<keyword id="KW-1003">Cell membrane</keyword>
<keyword id="KW-1015">Disulfide bond</keyword>
<keyword id="KW-0325">Glycoprotein</keyword>
<keyword id="KW-0407">Ion channel</keyword>
<keyword id="KW-0406">Ion transport</keyword>
<keyword id="KW-1071">Ligand-gated ion channel</keyword>
<keyword id="KW-0472">Membrane</keyword>
<keyword id="KW-0675">Receptor</keyword>
<keyword id="KW-1185">Reference proteome</keyword>
<keyword id="KW-0732">Signal</keyword>
<keyword id="KW-0812">Transmembrane</keyword>
<keyword id="KW-1133">Transmembrane helix</keyword>
<keyword id="KW-0813">Transport</keyword>
<organism>
    <name type="scientific">Caenorhabditis elegans</name>
    <dbReference type="NCBI Taxonomy" id="6239"/>
    <lineage>
        <taxon>Eukaryota</taxon>
        <taxon>Metazoa</taxon>
        <taxon>Ecdysozoa</taxon>
        <taxon>Nematoda</taxon>
        <taxon>Chromadorea</taxon>
        <taxon>Rhabditida</taxon>
        <taxon>Rhabditina</taxon>
        <taxon>Rhabditomorpha</taxon>
        <taxon>Rhabditoidea</taxon>
        <taxon>Rhabditidae</taxon>
        <taxon>Peloderinae</taxon>
        <taxon>Caenorhabditis</taxon>
    </lineage>
</organism>